<reference key="1">
    <citation type="journal article" date="2006" name="PLoS Genet.">
        <title>Secrets of soil survival revealed by the genome sequence of Arthrobacter aurescens TC1.</title>
        <authorList>
            <person name="Mongodin E.F."/>
            <person name="Shapir N."/>
            <person name="Daugherty S.C."/>
            <person name="DeBoy R.T."/>
            <person name="Emerson J.B."/>
            <person name="Shvartzbeyn A."/>
            <person name="Radune D."/>
            <person name="Vamathevan J."/>
            <person name="Riggs F."/>
            <person name="Grinberg V."/>
            <person name="Khouri H.M."/>
            <person name="Wackett L.P."/>
            <person name="Nelson K.E."/>
            <person name="Sadowsky M.J."/>
        </authorList>
    </citation>
    <scope>NUCLEOTIDE SEQUENCE [LARGE SCALE GENOMIC DNA]</scope>
    <source>
        <strain>TC1</strain>
    </source>
</reference>
<proteinExistence type="inferred from homology"/>
<dbReference type="EC" id="3.5.1.5" evidence="1"/>
<dbReference type="EMBL" id="CP000474">
    <property type="protein sequence ID" value="ABM06851.1"/>
    <property type="molecule type" value="Genomic_DNA"/>
</dbReference>
<dbReference type="RefSeq" id="WP_011772983.1">
    <property type="nucleotide sequence ID" value="NC_008711.1"/>
</dbReference>
<dbReference type="SMR" id="A1R1C3"/>
<dbReference type="STRING" id="290340.AAur_0214"/>
<dbReference type="KEGG" id="aau:AAur_0214"/>
<dbReference type="eggNOG" id="COG0831">
    <property type="taxonomic scope" value="Bacteria"/>
</dbReference>
<dbReference type="HOGENOM" id="CLU_145825_1_0_11"/>
<dbReference type="OrthoDB" id="9797217at2"/>
<dbReference type="UniPathway" id="UPA00258">
    <property type="reaction ID" value="UER00370"/>
</dbReference>
<dbReference type="Proteomes" id="UP000000637">
    <property type="component" value="Chromosome"/>
</dbReference>
<dbReference type="GO" id="GO:0005737">
    <property type="term" value="C:cytoplasm"/>
    <property type="evidence" value="ECO:0007669"/>
    <property type="project" value="UniProtKB-SubCell"/>
</dbReference>
<dbReference type="GO" id="GO:0016151">
    <property type="term" value="F:nickel cation binding"/>
    <property type="evidence" value="ECO:0007669"/>
    <property type="project" value="InterPro"/>
</dbReference>
<dbReference type="GO" id="GO:0009039">
    <property type="term" value="F:urease activity"/>
    <property type="evidence" value="ECO:0007669"/>
    <property type="project" value="UniProtKB-UniRule"/>
</dbReference>
<dbReference type="GO" id="GO:0043419">
    <property type="term" value="P:urea catabolic process"/>
    <property type="evidence" value="ECO:0007669"/>
    <property type="project" value="UniProtKB-UniRule"/>
</dbReference>
<dbReference type="CDD" id="cd00390">
    <property type="entry name" value="Urease_gamma"/>
    <property type="match status" value="1"/>
</dbReference>
<dbReference type="Gene3D" id="3.30.280.10">
    <property type="entry name" value="Urease, gamma-like subunit"/>
    <property type="match status" value="1"/>
</dbReference>
<dbReference type="HAMAP" id="MF_00739">
    <property type="entry name" value="Urease_gamma"/>
    <property type="match status" value="1"/>
</dbReference>
<dbReference type="InterPro" id="IPR012010">
    <property type="entry name" value="Urease_gamma"/>
</dbReference>
<dbReference type="InterPro" id="IPR002026">
    <property type="entry name" value="Urease_gamma/gamma-beta_su"/>
</dbReference>
<dbReference type="InterPro" id="IPR036463">
    <property type="entry name" value="Urease_gamma_sf"/>
</dbReference>
<dbReference type="InterPro" id="IPR050069">
    <property type="entry name" value="Urease_subunit"/>
</dbReference>
<dbReference type="NCBIfam" id="NF009712">
    <property type="entry name" value="PRK13241.1"/>
    <property type="match status" value="1"/>
</dbReference>
<dbReference type="NCBIfam" id="TIGR00193">
    <property type="entry name" value="urease_gam"/>
    <property type="match status" value="1"/>
</dbReference>
<dbReference type="PANTHER" id="PTHR33569">
    <property type="entry name" value="UREASE"/>
    <property type="match status" value="1"/>
</dbReference>
<dbReference type="PANTHER" id="PTHR33569:SF1">
    <property type="entry name" value="UREASE"/>
    <property type="match status" value="1"/>
</dbReference>
<dbReference type="Pfam" id="PF00547">
    <property type="entry name" value="Urease_gamma"/>
    <property type="match status" value="1"/>
</dbReference>
<dbReference type="PIRSF" id="PIRSF001223">
    <property type="entry name" value="Urease_gamma"/>
    <property type="match status" value="1"/>
</dbReference>
<dbReference type="SUPFAM" id="SSF54111">
    <property type="entry name" value="Urease, gamma-subunit"/>
    <property type="match status" value="1"/>
</dbReference>
<sequence>MHLLPREQEKLMIVVAADLARRRQARGLKLNYPEAVAIISYELIEGARDGRTVAELMSYGTTLLRREDVMEGVPEMIHDVQIEATFPDGTKLVTVHNPIR</sequence>
<feature type="chain" id="PRO_1000046309" description="Urease subunit gamma">
    <location>
        <begin position="1"/>
        <end position="100"/>
    </location>
</feature>
<accession>A1R1C3</accession>
<keyword id="KW-0963">Cytoplasm</keyword>
<keyword id="KW-0378">Hydrolase</keyword>
<protein>
    <recommendedName>
        <fullName evidence="1">Urease subunit gamma</fullName>
        <ecNumber evidence="1">3.5.1.5</ecNumber>
    </recommendedName>
    <alternativeName>
        <fullName evidence="1">Urea amidohydrolase subunit gamma</fullName>
    </alternativeName>
</protein>
<comment type="catalytic activity">
    <reaction evidence="1">
        <text>urea + 2 H2O + H(+) = hydrogencarbonate + 2 NH4(+)</text>
        <dbReference type="Rhea" id="RHEA:20557"/>
        <dbReference type="ChEBI" id="CHEBI:15377"/>
        <dbReference type="ChEBI" id="CHEBI:15378"/>
        <dbReference type="ChEBI" id="CHEBI:16199"/>
        <dbReference type="ChEBI" id="CHEBI:17544"/>
        <dbReference type="ChEBI" id="CHEBI:28938"/>
        <dbReference type="EC" id="3.5.1.5"/>
    </reaction>
</comment>
<comment type="pathway">
    <text evidence="1">Nitrogen metabolism; urea degradation; CO(2) and NH(3) from urea (urease route): step 1/1.</text>
</comment>
<comment type="subunit">
    <text evidence="1">Heterotrimer of UreA (gamma), UreB (beta) and UreC (alpha) subunits. Three heterotrimers associate to form the active enzyme.</text>
</comment>
<comment type="subcellular location">
    <subcellularLocation>
        <location evidence="1">Cytoplasm</location>
    </subcellularLocation>
</comment>
<comment type="similarity">
    <text evidence="1">Belongs to the urease gamma subunit family.</text>
</comment>
<name>URE3_PAEAT</name>
<evidence type="ECO:0000255" key="1">
    <source>
        <dbReference type="HAMAP-Rule" id="MF_00739"/>
    </source>
</evidence>
<organism>
    <name type="scientific">Paenarthrobacter aurescens (strain TC1)</name>
    <dbReference type="NCBI Taxonomy" id="290340"/>
    <lineage>
        <taxon>Bacteria</taxon>
        <taxon>Bacillati</taxon>
        <taxon>Actinomycetota</taxon>
        <taxon>Actinomycetes</taxon>
        <taxon>Micrococcales</taxon>
        <taxon>Micrococcaceae</taxon>
        <taxon>Paenarthrobacter</taxon>
    </lineage>
</organism>
<gene>
    <name evidence="1" type="primary">ureA</name>
    <name type="ordered locus">AAur_0214</name>
</gene>